<proteinExistence type="evidence at protein level"/>
<organism>
    <name type="scientific">Encephalitozoon cuniculi (strain GB-M1)</name>
    <name type="common">Microsporidian parasite</name>
    <dbReference type="NCBI Taxonomy" id="284813"/>
    <lineage>
        <taxon>Eukaryota</taxon>
        <taxon>Fungi</taxon>
        <taxon>Fungi incertae sedis</taxon>
        <taxon>Microsporidia</taxon>
        <taxon>Unikaryonidae</taxon>
        <taxon>Encephalitozoon</taxon>
    </lineage>
</organism>
<sequence>MDNALIADENLKKPSKPAYYGTAGYRSKTSDLNNILCRASLIAYLRSTTFAGKIIGVMITASHNPVEYNGIKIIDHNGDMLDEVWEEYSDRIVNCDDEKLAREMKKILRSCSNQSELGEGVRGHVVLGRDTRDSGERLCNNIRSVLGKLNCTVDDYGVVTTPELHFLVRKCNTENRVVDKAEYMKNIAHNFNSLSSITKGNLRMMIDTANGVADMKLKELDGMLDGKLNYEVLNDPKGILNLDCGADFVKTKKRAPRLEALSSSGFSQAANRICASFDGDVDRLIFFTGPKDTEIFDGDSQAVFLALYIRSLLDRIESRLSIGVVLSYYSNNAAVDVLPPESFKVVMAQTGVKNFVSAAREFDVGIYFEPNGHGSVCFSQACIDEIEKGSTKSHAILKILANLFDPCIGDALANFVIFKALMGSADDLRKFRENPSRLLTVKIVDKNSIKVDQKNQVIEPKELQDKIDVEALSLGGRSFVRPSGTEDVVRVYAECPSEADADLLCLKVAQHVYDMCNGIGDHPEIDYTSK</sequence>
<reference key="1">
    <citation type="journal article" date="2001" name="Genome Res.">
        <title>Sequence and analysis of chromosome I of the amitochondriate intracellular parasite Encephalitozoon cuniculi (Microspora).</title>
        <authorList>
            <person name="Peyret P."/>
            <person name="Katinka M.D."/>
            <person name="Duprat S."/>
            <person name="Duffieux F."/>
            <person name="Barbe V."/>
            <person name="Barbazanges M."/>
            <person name="Weissenbach J."/>
            <person name="Saurin W."/>
            <person name="Vivares C.P."/>
        </authorList>
    </citation>
    <scope>NUCLEOTIDE SEQUENCE [LARGE SCALE GENOMIC DNA]</scope>
    <source>
        <strain>GB-M1</strain>
    </source>
</reference>
<reference key="2">
    <citation type="journal article" date="2001" name="Nature">
        <title>Genome sequence and gene compaction of the eukaryote parasite Encephalitozoon cuniculi.</title>
        <authorList>
            <person name="Katinka M.D."/>
            <person name="Duprat S."/>
            <person name="Cornillot E."/>
            <person name="Metenier G."/>
            <person name="Thomarat F."/>
            <person name="Prensier G."/>
            <person name="Barbe V."/>
            <person name="Peyretaillade E."/>
            <person name="Brottier P."/>
            <person name="Wincker P."/>
            <person name="Delbac F."/>
            <person name="El Alaoui H."/>
            <person name="Peyret P."/>
            <person name="Saurin W."/>
            <person name="Gouy M."/>
            <person name="Weissenbach J."/>
            <person name="Vivares C.P."/>
        </authorList>
    </citation>
    <scope>NUCLEOTIDE SEQUENCE [LARGE SCALE GENOMIC DNA]</scope>
    <source>
        <strain>GB-M1</strain>
    </source>
</reference>
<reference key="3">
    <citation type="journal article" date="2006" name="Proteomics">
        <title>Proteomic analysis of the eukaryotic parasite Encephalitozoon cuniculi (microsporidia): a reference map for proteins expressed in late sporogonial stages.</title>
        <authorList>
            <person name="Brosson D."/>
            <person name="Kuhn L."/>
            <person name="Delbac F."/>
            <person name="Garin J."/>
            <person name="Vivares C.P."/>
            <person name="Texier C."/>
        </authorList>
    </citation>
    <scope>IDENTIFICATION BY MASS SPECTROMETRY [LARGE SCALE ANALYSIS]</scope>
    <scope>DEVELOPMENTAL STAGE</scope>
</reference>
<name>AGM1_ENCCU</name>
<gene>
    <name evidence="1" type="primary">PCM1</name>
    <name type="ordered locus">ECU01_0650</name>
</gene>
<dbReference type="EC" id="5.4.2.3" evidence="1"/>
<dbReference type="EMBL" id="AL391737">
    <property type="protein sequence ID" value="CAD24935.1"/>
    <property type="molecule type" value="Genomic_DNA"/>
</dbReference>
<dbReference type="RefSeq" id="XP_965900.1">
    <property type="nucleotide sequence ID" value="XM_960807.1"/>
</dbReference>
<dbReference type="SMR" id="Q8SSL7"/>
<dbReference type="FunCoup" id="Q8SSL7">
    <property type="interactions" value="48"/>
</dbReference>
<dbReference type="STRING" id="284813.Q8SSL7"/>
<dbReference type="VEuPathDB" id="MicrosporidiaDB:ECU01_0650"/>
<dbReference type="HOGENOM" id="CLU_022890_1_0_1"/>
<dbReference type="InParanoid" id="Q8SSL7"/>
<dbReference type="OMA" id="WEAYATK"/>
<dbReference type="OrthoDB" id="1928at2759"/>
<dbReference type="UniPathway" id="UPA00113">
    <property type="reaction ID" value="UER00530"/>
</dbReference>
<dbReference type="Proteomes" id="UP000000819">
    <property type="component" value="Chromosome I"/>
</dbReference>
<dbReference type="GO" id="GO:0000287">
    <property type="term" value="F:magnesium ion binding"/>
    <property type="evidence" value="ECO:0007669"/>
    <property type="project" value="InterPro"/>
</dbReference>
<dbReference type="GO" id="GO:0004610">
    <property type="term" value="F:phosphoacetylglucosamine mutase activity"/>
    <property type="evidence" value="ECO:0007669"/>
    <property type="project" value="UniProtKB-EC"/>
</dbReference>
<dbReference type="GO" id="GO:0005975">
    <property type="term" value="P:carbohydrate metabolic process"/>
    <property type="evidence" value="ECO:0007669"/>
    <property type="project" value="InterPro"/>
</dbReference>
<dbReference type="GO" id="GO:0071555">
    <property type="term" value="P:cell wall organization"/>
    <property type="evidence" value="ECO:0007669"/>
    <property type="project" value="UniProtKB-KW"/>
</dbReference>
<dbReference type="GO" id="GO:0006048">
    <property type="term" value="P:UDP-N-acetylglucosamine biosynthetic process"/>
    <property type="evidence" value="ECO:0007669"/>
    <property type="project" value="UniProtKB-UniPathway"/>
</dbReference>
<dbReference type="CDD" id="cd03086">
    <property type="entry name" value="PGM3"/>
    <property type="match status" value="1"/>
</dbReference>
<dbReference type="FunFam" id="3.40.120.10:FF:000013">
    <property type="entry name" value="Phosphoacetylglucosamine mutase"/>
    <property type="match status" value="1"/>
</dbReference>
<dbReference type="Gene3D" id="3.40.120.10">
    <property type="entry name" value="Alpha-D-Glucose-1,6-Bisphosphate, subunit A, domain 3"/>
    <property type="match status" value="3"/>
</dbReference>
<dbReference type="Gene3D" id="3.30.310.50">
    <property type="entry name" value="Alpha-D-phosphohexomutase, C-terminal domain"/>
    <property type="match status" value="1"/>
</dbReference>
<dbReference type="InterPro" id="IPR005844">
    <property type="entry name" value="A-D-PHexomutase_a/b/a-I"/>
</dbReference>
<dbReference type="InterPro" id="IPR016055">
    <property type="entry name" value="A-D-PHexomutase_a/b/a-I/II/III"/>
</dbReference>
<dbReference type="InterPro" id="IPR005845">
    <property type="entry name" value="A-D-PHexomutase_a/b/a-II"/>
</dbReference>
<dbReference type="InterPro" id="IPR005843">
    <property type="entry name" value="A-D-PHexomutase_C"/>
</dbReference>
<dbReference type="InterPro" id="IPR036900">
    <property type="entry name" value="A-D-PHexomutase_C_sf"/>
</dbReference>
<dbReference type="InterPro" id="IPR016066">
    <property type="entry name" value="A-D-PHexomutase_CS"/>
</dbReference>
<dbReference type="InterPro" id="IPR049022">
    <property type="entry name" value="AMG1_III"/>
</dbReference>
<dbReference type="InterPro" id="IPR016657">
    <property type="entry name" value="PAGM"/>
</dbReference>
<dbReference type="PANTHER" id="PTHR45955">
    <property type="entry name" value="PHOSPHOACETYLGLUCOSAMINE MUTASE"/>
    <property type="match status" value="1"/>
</dbReference>
<dbReference type="PANTHER" id="PTHR45955:SF1">
    <property type="entry name" value="PHOSPHOACETYLGLUCOSAMINE MUTASE"/>
    <property type="match status" value="1"/>
</dbReference>
<dbReference type="Pfam" id="PF21404">
    <property type="entry name" value="AMG1_III"/>
    <property type="match status" value="1"/>
</dbReference>
<dbReference type="Pfam" id="PF02878">
    <property type="entry name" value="PGM_PMM_I"/>
    <property type="match status" value="2"/>
</dbReference>
<dbReference type="Pfam" id="PF02879">
    <property type="entry name" value="PGM_PMM_II"/>
    <property type="match status" value="1"/>
</dbReference>
<dbReference type="Pfam" id="PF00408">
    <property type="entry name" value="PGM_PMM_IV"/>
    <property type="match status" value="1"/>
</dbReference>
<dbReference type="PIRSF" id="PIRSF016408">
    <property type="entry name" value="PAGM"/>
    <property type="match status" value="1"/>
</dbReference>
<dbReference type="SUPFAM" id="SSF55957">
    <property type="entry name" value="Phosphoglucomutase, C-terminal domain"/>
    <property type="match status" value="1"/>
</dbReference>
<dbReference type="SUPFAM" id="SSF53738">
    <property type="entry name" value="Phosphoglucomutase, first 3 domains"/>
    <property type="match status" value="4"/>
</dbReference>
<dbReference type="PROSITE" id="PS00710">
    <property type="entry name" value="PGM_PMM"/>
    <property type="match status" value="1"/>
</dbReference>
<feature type="chain" id="PRO_0000381747" description="Probable phosphoacetylglucosamine mutase">
    <location>
        <begin position="1"/>
        <end position="530"/>
    </location>
</feature>
<feature type="active site" description="Phosphoserine intermediate" evidence="2">
    <location>
        <position position="62"/>
    </location>
</feature>
<feature type="binding site" description="via phosphate group" evidence="2">
    <location>
        <position position="62"/>
    </location>
    <ligand>
        <name>Mg(2+)</name>
        <dbReference type="ChEBI" id="CHEBI:18420"/>
    </ligand>
</feature>
<feature type="binding site" evidence="2">
    <location>
        <position position="278"/>
    </location>
    <ligand>
        <name>Mg(2+)</name>
        <dbReference type="ChEBI" id="CHEBI:18420"/>
    </ligand>
</feature>
<feature type="binding site" evidence="2">
    <location>
        <position position="280"/>
    </location>
    <ligand>
        <name>Mg(2+)</name>
        <dbReference type="ChEBI" id="CHEBI:18420"/>
    </ligand>
</feature>
<feature type="binding site" evidence="2">
    <location>
        <position position="282"/>
    </location>
    <ligand>
        <name>Mg(2+)</name>
        <dbReference type="ChEBI" id="CHEBI:18420"/>
    </ligand>
</feature>
<feature type="binding site" evidence="2">
    <location>
        <begin position="369"/>
        <end position="371"/>
    </location>
    <ligand>
        <name>substrate</name>
    </ligand>
</feature>
<feature type="binding site" evidence="2">
    <location>
        <begin position="481"/>
        <end position="485"/>
    </location>
    <ligand>
        <name>substrate</name>
    </ligand>
</feature>
<feature type="binding site" evidence="2">
    <location>
        <position position="490"/>
    </location>
    <ligand>
        <name>substrate</name>
    </ligand>
</feature>
<accession>Q8SSL7</accession>
<protein>
    <recommendedName>
        <fullName evidence="1">Probable phosphoacetylglucosamine mutase</fullName>
        <shortName>PAGM</shortName>
        <ecNumber evidence="1">5.4.2.3</ecNumber>
    </recommendedName>
    <alternativeName>
        <fullName evidence="1">Acetylglucosamine phosphomutase</fullName>
    </alternativeName>
    <alternativeName>
        <fullName evidence="1">N-acetylglucosamine-phosphate mutase</fullName>
    </alternativeName>
</protein>
<keyword id="KW-0119">Carbohydrate metabolism</keyword>
<keyword id="KW-0961">Cell wall biogenesis/degradation</keyword>
<keyword id="KW-0413">Isomerase</keyword>
<keyword id="KW-0460">Magnesium</keyword>
<keyword id="KW-0479">Metal-binding</keyword>
<keyword id="KW-1185">Reference proteome</keyword>
<comment type="function">
    <text evidence="1">Catalyzes the conversion of GlcNAc-6-P into GlcNAc-1-P during the synthesis of uridine diphosphate/UDP-GlcNAc, which is a biosynthetic precursor of chitin and also supplies the amino sugars for N-linked oligosaccharides of glycoproteins.</text>
</comment>
<comment type="catalytic activity">
    <reaction evidence="1">
        <text>N-acetyl-alpha-D-glucosamine 1-phosphate = N-acetyl-D-glucosamine 6-phosphate</text>
        <dbReference type="Rhea" id="RHEA:23804"/>
        <dbReference type="ChEBI" id="CHEBI:57513"/>
        <dbReference type="ChEBI" id="CHEBI:57776"/>
        <dbReference type="EC" id="5.4.2.3"/>
    </reaction>
</comment>
<comment type="cofactor">
    <cofactor evidence="2">
        <name>Mg(2+)</name>
        <dbReference type="ChEBI" id="CHEBI:18420"/>
    </cofactor>
    <text evidence="2">Binds 1 Mg(2+) ion per subunit.</text>
</comment>
<comment type="pathway">
    <text evidence="1">Nucleotide-sugar biosynthesis; UDP-N-acetyl-alpha-D-glucosamine biosynthesis; N-acetyl-alpha-D-glucosamine 1-phosphate from alpha-D-glucosamine 6-phosphate (route I): step 2/2.</text>
</comment>
<comment type="developmental stage">
    <text evidence="3">Expressed in late sporogonial stages.</text>
</comment>
<comment type="similarity">
    <text evidence="4">Belongs to the phosphohexose mutase family.</text>
</comment>
<evidence type="ECO:0000250" key="1">
    <source>
        <dbReference type="UniProtKB" id="P38628"/>
    </source>
</evidence>
<evidence type="ECO:0000250" key="2">
    <source>
        <dbReference type="UniProtKB" id="Q9P4V2"/>
    </source>
</evidence>
<evidence type="ECO:0000269" key="3">
    <source>
    </source>
</evidence>
<evidence type="ECO:0000305" key="4"/>